<accession>Q6MEK6</accession>
<evidence type="ECO:0000255" key="1">
    <source>
        <dbReference type="HAMAP-Rule" id="MF_01395"/>
    </source>
</evidence>
<evidence type="ECO:0000255" key="2">
    <source>
        <dbReference type="PROSITE-ProRule" id="PRU01136"/>
    </source>
</evidence>
<evidence type="ECO:0000256" key="3">
    <source>
        <dbReference type="SAM" id="MobiDB-lite"/>
    </source>
</evidence>
<comment type="function">
    <text evidence="1">Component of the acetyl coenzyme A carboxylase (ACC) complex. Biotin carboxylase (BC) catalyzes the carboxylation of biotin on its carrier protein (BCCP) and then the CO(2) group is transferred by the transcarboxylase to acetyl-CoA to form malonyl-CoA.</text>
</comment>
<comment type="catalytic activity">
    <reaction evidence="1">
        <text>N(6)-carboxybiotinyl-L-lysyl-[protein] + acetyl-CoA = N(6)-biotinyl-L-lysyl-[protein] + malonyl-CoA</text>
        <dbReference type="Rhea" id="RHEA:54728"/>
        <dbReference type="Rhea" id="RHEA-COMP:10505"/>
        <dbReference type="Rhea" id="RHEA-COMP:10506"/>
        <dbReference type="ChEBI" id="CHEBI:57288"/>
        <dbReference type="ChEBI" id="CHEBI:57384"/>
        <dbReference type="ChEBI" id="CHEBI:83144"/>
        <dbReference type="ChEBI" id="CHEBI:83145"/>
        <dbReference type="EC" id="2.1.3.15"/>
    </reaction>
</comment>
<comment type="cofactor">
    <cofactor evidence="1">
        <name>Zn(2+)</name>
        <dbReference type="ChEBI" id="CHEBI:29105"/>
    </cofactor>
    <text evidence="1">Binds 1 zinc ion per subunit.</text>
</comment>
<comment type="pathway">
    <text evidence="1">Lipid metabolism; malonyl-CoA biosynthesis; malonyl-CoA from acetyl-CoA: step 1/1.</text>
</comment>
<comment type="subunit">
    <text evidence="1">Acetyl-CoA carboxylase is a heterohexamer composed of biotin carboxyl carrier protein (AccB), biotin carboxylase (AccC) and two subunits each of ACCase subunit alpha (AccA) and ACCase subunit beta (AccD).</text>
</comment>
<comment type="subcellular location">
    <subcellularLocation>
        <location evidence="1">Cytoplasm</location>
    </subcellularLocation>
</comment>
<comment type="similarity">
    <text evidence="1">Belongs to the AccD/PCCB family.</text>
</comment>
<proteinExistence type="inferred from homology"/>
<reference key="1">
    <citation type="journal article" date="2004" name="Science">
        <title>Illuminating the evolutionary history of chlamydiae.</title>
        <authorList>
            <person name="Horn M."/>
            <person name="Collingro A."/>
            <person name="Schmitz-Esser S."/>
            <person name="Beier C.L."/>
            <person name="Purkhold U."/>
            <person name="Fartmann B."/>
            <person name="Brandt P."/>
            <person name="Nyakatura G.J."/>
            <person name="Droege M."/>
            <person name="Frishman D."/>
            <person name="Rattei T."/>
            <person name="Mewes H.-W."/>
            <person name="Wagner M."/>
        </authorList>
    </citation>
    <scope>NUCLEOTIDE SEQUENCE [LARGE SCALE GENOMIC DNA]</scope>
    <source>
        <strain>UWE25</strain>
    </source>
</reference>
<dbReference type="EC" id="2.1.3.15" evidence="1"/>
<dbReference type="EMBL" id="BX908798">
    <property type="protein sequence ID" value="CAF22993.1"/>
    <property type="molecule type" value="Genomic_DNA"/>
</dbReference>
<dbReference type="RefSeq" id="WP_011174819.1">
    <property type="nucleotide sequence ID" value="NC_005861.2"/>
</dbReference>
<dbReference type="SMR" id="Q6MEK6"/>
<dbReference type="STRING" id="264201.pc0269"/>
<dbReference type="KEGG" id="pcu:PC_RS01310"/>
<dbReference type="eggNOG" id="COG0777">
    <property type="taxonomic scope" value="Bacteria"/>
</dbReference>
<dbReference type="HOGENOM" id="CLU_015486_1_0_0"/>
<dbReference type="OrthoDB" id="9772975at2"/>
<dbReference type="UniPathway" id="UPA00655">
    <property type="reaction ID" value="UER00711"/>
</dbReference>
<dbReference type="Proteomes" id="UP000000529">
    <property type="component" value="Chromosome"/>
</dbReference>
<dbReference type="GO" id="GO:0009317">
    <property type="term" value="C:acetyl-CoA carboxylase complex"/>
    <property type="evidence" value="ECO:0007669"/>
    <property type="project" value="InterPro"/>
</dbReference>
<dbReference type="GO" id="GO:0003989">
    <property type="term" value="F:acetyl-CoA carboxylase activity"/>
    <property type="evidence" value="ECO:0007669"/>
    <property type="project" value="InterPro"/>
</dbReference>
<dbReference type="GO" id="GO:0005524">
    <property type="term" value="F:ATP binding"/>
    <property type="evidence" value="ECO:0007669"/>
    <property type="project" value="UniProtKB-KW"/>
</dbReference>
<dbReference type="GO" id="GO:0016743">
    <property type="term" value="F:carboxyl- or carbamoyltransferase activity"/>
    <property type="evidence" value="ECO:0007669"/>
    <property type="project" value="UniProtKB-UniRule"/>
</dbReference>
<dbReference type="GO" id="GO:0008270">
    <property type="term" value="F:zinc ion binding"/>
    <property type="evidence" value="ECO:0007669"/>
    <property type="project" value="UniProtKB-UniRule"/>
</dbReference>
<dbReference type="GO" id="GO:0006633">
    <property type="term" value="P:fatty acid biosynthetic process"/>
    <property type="evidence" value="ECO:0007669"/>
    <property type="project" value="UniProtKB-KW"/>
</dbReference>
<dbReference type="GO" id="GO:2001295">
    <property type="term" value="P:malonyl-CoA biosynthetic process"/>
    <property type="evidence" value="ECO:0007669"/>
    <property type="project" value="UniProtKB-UniRule"/>
</dbReference>
<dbReference type="Gene3D" id="3.90.226.10">
    <property type="entry name" value="2-enoyl-CoA Hydratase, Chain A, domain 1"/>
    <property type="match status" value="1"/>
</dbReference>
<dbReference type="HAMAP" id="MF_01395">
    <property type="entry name" value="AcetylCoA_CT_beta"/>
    <property type="match status" value="1"/>
</dbReference>
<dbReference type="InterPro" id="IPR034733">
    <property type="entry name" value="AcCoA_carboxyl_beta"/>
</dbReference>
<dbReference type="InterPro" id="IPR000438">
    <property type="entry name" value="Acetyl_CoA_COase_Trfase_b_su"/>
</dbReference>
<dbReference type="InterPro" id="IPR029045">
    <property type="entry name" value="ClpP/crotonase-like_dom_sf"/>
</dbReference>
<dbReference type="InterPro" id="IPR011762">
    <property type="entry name" value="COA_CT_N"/>
</dbReference>
<dbReference type="InterPro" id="IPR041010">
    <property type="entry name" value="Znf-ACC"/>
</dbReference>
<dbReference type="NCBIfam" id="TIGR00515">
    <property type="entry name" value="accD"/>
    <property type="match status" value="1"/>
</dbReference>
<dbReference type="PANTHER" id="PTHR42995">
    <property type="entry name" value="ACETYL-COENZYME A CARBOXYLASE CARBOXYL TRANSFERASE SUBUNIT BETA, CHLOROPLASTIC"/>
    <property type="match status" value="1"/>
</dbReference>
<dbReference type="PANTHER" id="PTHR42995:SF5">
    <property type="entry name" value="ACETYL-COENZYME A CARBOXYLASE CARBOXYL TRANSFERASE SUBUNIT BETA, CHLOROPLASTIC"/>
    <property type="match status" value="1"/>
</dbReference>
<dbReference type="Pfam" id="PF01039">
    <property type="entry name" value="Carboxyl_trans"/>
    <property type="match status" value="1"/>
</dbReference>
<dbReference type="Pfam" id="PF17848">
    <property type="entry name" value="Zn_ribbon_ACC"/>
    <property type="match status" value="1"/>
</dbReference>
<dbReference type="PRINTS" id="PR01070">
    <property type="entry name" value="ACCCTRFRASEB"/>
</dbReference>
<dbReference type="SUPFAM" id="SSF52096">
    <property type="entry name" value="ClpP/crotonase"/>
    <property type="match status" value="1"/>
</dbReference>
<dbReference type="PROSITE" id="PS50980">
    <property type="entry name" value="COA_CT_NTER"/>
    <property type="match status" value="1"/>
</dbReference>
<sequence>MGLFSRDKPKIKIQTTKKDGFSGWLKCTHCNELIHANELEQNSNCCPKCDYHYRLSTEDRIKSLSNPNTFKPLFQNLQPVDTLNFVDTEPYPKRLANAQEKSTSNEAVVVGTCMINKHKIALGVLDFSFMGGSMGSVVGERLTRLIEHALKEKLPLIIVSTSGGARMQESILSLMQMAKTSGALAKLHEARIPYISVLTNPTTGGVTASFASLGDIIVAEPNALICFAGPRVIEQTIGQRLPPGAQKSEFLLEHGMIDCIVKRPELKQKLAELIDFLKGNFSEENEPSPPPKNLIKKTSPLKDKN</sequence>
<keyword id="KW-0067">ATP-binding</keyword>
<keyword id="KW-0963">Cytoplasm</keyword>
<keyword id="KW-0275">Fatty acid biosynthesis</keyword>
<keyword id="KW-0276">Fatty acid metabolism</keyword>
<keyword id="KW-0444">Lipid biosynthesis</keyword>
<keyword id="KW-0443">Lipid metabolism</keyword>
<keyword id="KW-0479">Metal-binding</keyword>
<keyword id="KW-0547">Nucleotide-binding</keyword>
<keyword id="KW-1185">Reference proteome</keyword>
<keyword id="KW-0808">Transferase</keyword>
<keyword id="KW-0862">Zinc</keyword>
<keyword id="KW-0863">Zinc-finger</keyword>
<gene>
    <name evidence="1" type="primary">accD</name>
    <name type="ordered locus">pc0269</name>
</gene>
<organism>
    <name type="scientific">Protochlamydia amoebophila (strain UWE25)</name>
    <dbReference type="NCBI Taxonomy" id="264201"/>
    <lineage>
        <taxon>Bacteria</taxon>
        <taxon>Pseudomonadati</taxon>
        <taxon>Chlamydiota</taxon>
        <taxon>Chlamydiia</taxon>
        <taxon>Parachlamydiales</taxon>
        <taxon>Parachlamydiaceae</taxon>
        <taxon>Candidatus Protochlamydia</taxon>
    </lineage>
</organism>
<feature type="chain" id="PRO_0000359030" description="Acetyl-coenzyme A carboxylase carboxyl transferase subunit beta">
    <location>
        <begin position="1"/>
        <end position="305"/>
    </location>
</feature>
<feature type="domain" description="CoA carboxyltransferase N-terminal" evidence="2">
    <location>
        <begin position="23"/>
        <end position="292"/>
    </location>
</feature>
<feature type="zinc finger region" description="C4-type" evidence="1">
    <location>
        <begin position="27"/>
        <end position="49"/>
    </location>
</feature>
<feature type="region of interest" description="Disordered" evidence="3">
    <location>
        <begin position="281"/>
        <end position="305"/>
    </location>
</feature>
<feature type="binding site" evidence="1">
    <location>
        <position position="27"/>
    </location>
    <ligand>
        <name>Zn(2+)</name>
        <dbReference type="ChEBI" id="CHEBI:29105"/>
    </ligand>
</feature>
<feature type="binding site" evidence="1">
    <location>
        <position position="30"/>
    </location>
    <ligand>
        <name>Zn(2+)</name>
        <dbReference type="ChEBI" id="CHEBI:29105"/>
    </ligand>
</feature>
<feature type="binding site" evidence="1">
    <location>
        <position position="46"/>
    </location>
    <ligand>
        <name>Zn(2+)</name>
        <dbReference type="ChEBI" id="CHEBI:29105"/>
    </ligand>
</feature>
<feature type="binding site" evidence="1">
    <location>
        <position position="49"/>
    </location>
    <ligand>
        <name>Zn(2+)</name>
        <dbReference type="ChEBI" id="CHEBI:29105"/>
    </ligand>
</feature>
<name>ACCD_PARUW</name>
<protein>
    <recommendedName>
        <fullName evidence="1">Acetyl-coenzyme A carboxylase carboxyl transferase subunit beta</fullName>
        <shortName evidence="1">ACCase subunit beta</shortName>
        <shortName evidence="1">Acetyl-CoA carboxylase carboxyltransferase subunit beta</shortName>
        <ecNumber evidence="1">2.1.3.15</ecNumber>
    </recommendedName>
</protein>